<reference key="1">
    <citation type="journal article" date="2008" name="DNA Res.">
        <title>Complete genome sequence and comparative analysis of the wild-type commensal Escherichia coli strain SE11 isolated from a healthy adult.</title>
        <authorList>
            <person name="Oshima K."/>
            <person name="Toh H."/>
            <person name="Ogura Y."/>
            <person name="Sasamoto H."/>
            <person name="Morita H."/>
            <person name="Park S.-H."/>
            <person name="Ooka T."/>
            <person name="Iyoda S."/>
            <person name="Taylor T.D."/>
            <person name="Hayashi T."/>
            <person name="Itoh K."/>
            <person name="Hattori M."/>
        </authorList>
    </citation>
    <scope>NUCLEOTIDE SEQUENCE [LARGE SCALE GENOMIC DNA]</scope>
    <source>
        <strain>SE11</strain>
    </source>
</reference>
<organism>
    <name type="scientific">Escherichia coli (strain SE11)</name>
    <dbReference type="NCBI Taxonomy" id="409438"/>
    <lineage>
        <taxon>Bacteria</taxon>
        <taxon>Pseudomonadati</taxon>
        <taxon>Pseudomonadota</taxon>
        <taxon>Gammaproteobacteria</taxon>
        <taxon>Enterobacterales</taxon>
        <taxon>Enterobacteriaceae</taxon>
        <taxon>Escherichia</taxon>
    </lineage>
</organism>
<feature type="chain" id="PRO_1000140382" description="D-galactonate dehydratase">
    <location>
        <begin position="1"/>
        <end position="382"/>
    </location>
</feature>
<feature type="active site" description="Proton donor" evidence="1">
    <location>
        <position position="185"/>
    </location>
</feature>
<feature type="active site" description="Proton acceptor" evidence="1">
    <location>
        <position position="285"/>
    </location>
</feature>
<feature type="binding site" evidence="2">
    <location>
        <position position="183"/>
    </location>
    <ligand>
        <name>Mg(2+)</name>
        <dbReference type="ChEBI" id="CHEBI:18420"/>
    </ligand>
</feature>
<feature type="binding site" evidence="2">
    <location>
        <position position="209"/>
    </location>
    <ligand>
        <name>Mg(2+)</name>
        <dbReference type="ChEBI" id="CHEBI:18420"/>
    </ligand>
</feature>
<feature type="binding site" evidence="2">
    <location>
        <position position="235"/>
    </location>
    <ligand>
        <name>Mg(2+)</name>
        <dbReference type="ChEBI" id="CHEBI:18420"/>
    </ligand>
</feature>
<feature type="site" description="Increases basicity of active site His" evidence="2">
    <location>
        <position position="258"/>
    </location>
</feature>
<feature type="site" description="Transition state stabilizer" evidence="2">
    <location>
        <position position="310"/>
    </location>
</feature>
<comment type="function">
    <text evidence="2">Catalyzes the dehydration of D-galactonate to 2-keto-3-deoxy-D-galactonate.</text>
</comment>
<comment type="catalytic activity">
    <reaction evidence="2">
        <text>D-galactonate = 2-dehydro-3-deoxy-D-galactonate + H2O</text>
        <dbReference type="Rhea" id="RHEA:18649"/>
        <dbReference type="ChEBI" id="CHEBI:12931"/>
        <dbReference type="ChEBI" id="CHEBI:15377"/>
        <dbReference type="ChEBI" id="CHEBI:57989"/>
        <dbReference type="EC" id="4.2.1.6"/>
    </reaction>
</comment>
<comment type="cofactor">
    <cofactor evidence="2">
        <name>Mg(2+)</name>
        <dbReference type="ChEBI" id="CHEBI:18420"/>
    </cofactor>
    <text evidence="2">Binds 1 Mg(2+) ion per subunit.</text>
</comment>
<comment type="pathway">
    <text evidence="2">Carbohydrate acid metabolism; D-galactonate degradation; D-glyceraldehyde 3-phosphate and pyruvate from D-galactonate: step 1/3.</text>
</comment>
<comment type="miscellaneous">
    <text evidence="2">Reaction proceeds via an anti dehydration.</text>
</comment>
<comment type="similarity">
    <text evidence="2">Belongs to the mandelate racemase/muconate lactonizing enzyme family. GalD subfamily.</text>
</comment>
<evidence type="ECO:0000250" key="1"/>
<evidence type="ECO:0000255" key="2">
    <source>
        <dbReference type="HAMAP-Rule" id="MF_01289"/>
    </source>
</evidence>
<name>DGOD_ECOSE</name>
<sequence>MKITKITTYRLPPRWMFLKIETDEGVVGWGEPVIEGRARTVEAAVHELGDYLIGQDPSRINDLWQVMYRAGFYRGGPILMSAIAGIDQALWDIKGKVLNAPVWQLMGGLVRDKIKAYSWVGGDRPADVIDGIKTLREIGFDTFKLNGCEELGLIDNSRAVDAAVNTVAQIREAFGNQIEFGLDFHGRVSAPMAKVLIKELEPYRPLFIEEPVLAEQAEYYPKLAAQTHIPLAAGERMFSRFDFKRVLEAGGISILQPDLSHAGGITECYKIAGMAEAYDVTLAPHCPLGPIALAACLHIDFVSYNAVLQEQSMGIHYNKGAELLDFVKNKEDFSMVGGFFKPLTKPGLGVEIDEAKVIEFSKNAPDWRNPLWRHEDNSVAEW</sequence>
<proteinExistence type="inferred from homology"/>
<protein>
    <recommendedName>
        <fullName evidence="2">D-galactonate dehydratase</fullName>
        <shortName evidence="2">GalD</shortName>
        <ecNumber evidence="2">4.2.1.6</ecNumber>
    </recommendedName>
</protein>
<dbReference type="EC" id="4.2.1.6" evidence="2"/>
<dbReference type="EMBL" id="AP009240">
    <property type="protein sequence ID" value="BAG79502.1"/>
    <property type="molecule type" value="Genomic_DNA"/>
</dbReference>
<dbReference type="RefSeq" id="WP_000705001.1">
    <property type="nucleotide sequence ID" value="NC_011415.1"/>
</dbReference>
<dbReference type="SMR" id="B6I3S5"/>
<dbReference type="GeneID" id="75205406"/>
<dbReference type="KEGG" id="ecy:ECSE_3978"/>
<dbReference type="HOGENOM" id="CLU_030273_3_2_6"/>
<dbReference type="UniPathway" id="UPA00081">
    <property type="reaction ID" value="UER00518"/>
</dbReference>
<dbReference type="Proteomes" id="UP000008199">
    <property type="component" value="Chromosome"/>
</dbReference>
<dbReference type="GO" id="GO:0008869">
    <property type="term" value="F:galactonate dehydratase activity"/>
    <property type="evidence" value="ECO:0007669"/>
    <property type="project" value="UniProtKB-UniRule"/>
</dbReference>
<dbReference type="GO" id="GO:0000287">
    <property type="term" value="F:magnesium ion binding"/>
    <property type="evidence" value="ECO:0007669"/>
    <property type="project" value="UniProtKB-UniRule"/>
</dbReference>
<dbReference type="GO" id="GO:0009063">
    <property type="term" value="P:amino acid catabolic process"/>
    <property type="evidence" value="ECO:0007669"/>
    <property type="project" value="InterPro"/>
</dbReference>
<dbReference type="GO" id="GO:0034194">
    <property type="term" value="P:D-galactonate catabolic process"/>
    <property type="evidence" value="ECO:0007669"/>
    <property type="project" value="UniProtKB-UniRule"/>
</dbReference>
<dbReference type="CDD" id="cd03325">
    <property type="entry name" value="D-galactonate_dehydratase"/>
    <property type="match status" value="1"/>
</dbReference>
<dbReference type="FunFam" id="3.20.20.120:FF:000008">
    <property type="entry name" value="D-galactonate dehydratase"/>
    <property type="match status" value="1"/>
</dbReference>
<dbReference type="FunFam" id="3.30.390.10:FF:000003">
    <property type="entry name" value="D-galactonate dehydratase"/>
    <property type="match status" value="1"/>
</dbReference>
<dbReference type="Gene3D" id="3.20.20.120">
    <property type="entry name" value="Enolase-like C-terminal domain"/>
    <property type="match status" value="1"/>
</dbReference>
<dbReference type="Gene3D" id="3.30.390.10">
    <property type="entry name" value="Enolase-like, N-terminal domain"/>
    <property type="match status" value="1"/>
</dbReference>
<dbReference type="HAMAP" id="MF_01289">
    <property type="entry name" value="Galacton_dehydrat"/>
    <property type="match status" value="1"/>
</dbReference>
<dbReference type="InterPro" id="IPR034593">
    <property type="entry name" value="DgoD-like"/>
</dbReference>
<dbReference type="InterPro" id="IPR036849">
    <property type="entry name" value="Enolase-like_C_sf"/>
</dbReference>
<dbReference type="InterPro" id="IPR029017">
    <property type="entry name" value="Enolase-like_N"/>
</dbReference>
<dbReference type="InterPro" id="IPR029065">
    <property type="entry name" value="Enolase_C-like"/>
</dbReference>
<dbReference type="InterPro" id="IPR023592">
    <property type="entry name" value="Galactonate_deHydtase"/>
</dbReference>
<dbReference type="InterPro" id="IPR018110">
    <property type="entry name" value="Mandel_Rmase/mucon_lact_enz_CS"/>
</dbReference>
<dbReference type="InterPro" id="IPR013342">
    <property type="entry name" value="Mandelate_racemase_C"/>
</dbReference>
<dbReference type="InterPro" id="IPR013341">
    <property type="entry name" value="Mandelate_racemase_N_dom"/>
</dbReference>
<dbReference type="NCBIfam" id="NF010624">
    <property type="entry name" value="PRK14017.1"/>
    <property type="match status" value="1"/>
</dbReference>
<dbReference type="PANTHER" id="PTHR48080:SF2">
    <property type="entry name" value="D-GALACTONATE DEHYDRATASE"/>
    <property type="match status" value="1"/>
</dbReference>
<dbReference type="PANTHER" id="PTHR48080">
    <property type="entry name" value="D-GALACTONATE DEHYDRATASE-RELATED"/>
    <property type="match status" value="1"/>
</dbReference>
<dbReference type="Pfam" id="PF13378">
    <property type="entry name" value="MR_MLE_C"/>
    <property type="match status" value="1"/>
</dbReference>
<dbReference type="Pfam" id="PF02746">
    <property type="entry name" value="MR_MLE_N"/>
    <property type="match status" value="1"/>
</dbReference>
<dbReference type="SFLD" id="SFLDF00003">
    <property type="entry name" value="D-galactonate_dehydratase"/>
    <property type="match status" value="1"/>
</dbReference>
<dbReference type="SFLD" id="SFLDS00001">
    <property type="entry name" value="Enolase"/>
    <property type="match status" value="1"/>
</dbReference>
<dbReference type="SMART" id="SM00922">
    <property type="entry name" value="MR_MLE"/>
    <property type="match status" value="1"/>
</dbReference>
<dbReference type="SUPFAM" id="SSF51604">
    <property type="entry name" value="Enolase C-terminal domain-like"/>
    <property type="match status" value="1"/>
</dbReference>
<dbReference type="SUPFAM" id="SSF54826">
    <property type="entry name" value="Enolase N-terminal domain-like"/>
    <property type="match status" value="1"/>
</dbReference>
<dbReference type="PROSITE" id="PS00908">
    <property type="entry name" value="MR_MLE_1"/>
    <property type="match status" value="1"/>
</dbReference>
<dbReference type="PROSITE" id="PS00909">
    <property type="entry name" value="MR_MLE_2"/>
    <property type="match status" value="1"/>
</dbReference>
<keyword id="KW-0456">Lyase</keyword>
<keyword id="KW-0460">Magnesium</keyword>
<keyword id="KW-0479">Metal-binding</keyword>
<accession>B6I3S5</accession>
<gene>
    <name evidence="2" type="primary">dgoD</name>
    <name type="ordered locus">ECSE_3978</name>
</gene>